<evidence type="ECO:0000255" key="1">
    <source>
        <dbReference type="PROSITE-ProRule" id="PRU00541"/>
    </source>
</evidence>
<evidence type="ECO:0000255" key="2">
    <source>
        <dbReference type="PROSITE-ProRule" id="PRU00542"/>
    </source>
</evidence>
<evidence type="ECO:0000256" key="3">
    <source>
        <dbReference type="SAM" id="MobiDB-lite"/>
    </source>
</evidence>
<evidence type="ECO:0000305" key="4"/>
<dbReference type="EC" id="3.6.4.13"/>
<dbReference type="EMBL" id="AP003615">
    <property type="protein sequence ID" value="BAD35456.1"/>
    <property type="molecule type" value="Genomic_DNA"/>
</dbReference>
<dbReference type="EMBL" id="AP008212">
    <property type="protein sequence ID" value="BAF19920.1"/>
    <property type="status" value="ALT_INIT"/>
    <property type="molecule type" value="Genomic_DNA"/>
</dbReference>
<dbReference type="EMBL" id="AP014962">
    <property type="status" value="NOT_ANNOTATED_CDS"/>
    <property type="molecule type" value="Genomic_DNA"/>
</dbReference>
<dbReference type="EMBL" id="AK106474">
    <property type="status" value="NOT_ANNOTATED_CDS"/>
    <property type="molecule type" value="mRNA"/>
</dbReference>
<dbReference type="RefSeq" id="XP_015641985.1">
    <property type="nucleotide sequence ID" value="XM_015786499.1"/>
</dbReference>
<dbReference type="SMR" id="Q0DB53"/>
<dbReference type="FunCoup" id="Q0DB53">
    <property type="interactions" value="53"/>
</dbReference>
<dbReference type="STRING" id="39947.Q0DB53"/>
<dbReference type="PaxDb" id="39947-Q0DB53"/>
<dbReference type="KEGG" id="dosa:Os06g0602400"/>
<dbReference type="eggNOG" id="KOG0335">
    <property type="taxonomic scope" value="Eukaryota"/>
</dbReference>
<dbReference type="HOGENOM" id="CLU_003041_16_3_1"/>
<dbReference type="InParanoid" id="Q0DB53"/>
<dbReference type="OrthoDB" id="196131at2759"/>
<dbReference type="Proteomes" id="UP000000763">
    <property type="component" value="Chromosome 6"/>
</dbReference>
<dbReference type="Proteomes" id="UP000059680">
    <property type="component" value="Chromosome 6"/>
</dbReference>
<dbReference type="GO" id="GO:0005634">
    <property type="term" value="C:nucleus"/>
    <property type="evidence" value="ECO:0000318"/>
    <property type="project" value="GO_Central"/>
</dbReference>
<dbReference type="GO" id="GO:0005524">
    <property type="term" value="F:ATP binding"/>
    <property type="evidence" value="ECO:0007669"/>
    <property type="project" value="UniProtKB-KW"/>
</dbReference>
<dbReference type="GO" id="GO:0016887">
    <property type="term" value="F:ATP hydrolysis activity"/>
    <property type="evidence" value="ECO:0007669"/>
    <property type="project" value="RHEA"/>
</dbReference>
<dbReference type="GO" id="GO:0003729">
    <property type="term" value="F:mRNA binding"/>
    <property type="evidence" value="ECO:0000318"/>
    <property type="project" value="GO_Central"/>
</dbReference>
<dbReference type="GO" id="GO:0003724">
    <property type="term" value="F:RNA helicase activity"/>
    <property type="evidence" value="ECO:0000318"/>
    <property type="project" value="GO_Central"/>
</dbReference>
<dbReference type="CDD" id="cd17967">
    <property type="entry name" value="DEADc_DDX3_DDX4"/>
    <property type="match status" value="1"/>
</dbReference>
<dbReference type="CDD" id="cd18787">
    <property type="entry name" value="SF2_C_DEAD"/>
    <property type="match status" value="1"/>
</dbReference>
<dbReference type="FunFam" id="3.40.50.300:FF:000008">
    <property type="entry name" value="ATP-dependent RNA helicase RhlB"/>
    <property type="match status" value="1"/>
</dbReference>
<dbReference type="FunFam" id="3.40.50.300:FF:000397">
    <property type="entry name" value="Probable ATP-dependent RNA helicase DDX4"/>
    <property type="match status" value="1"/>
</dbReference>
<dbReference type="Gene3D" id="3.40.50.300">
    <property type="entry name" value="P-loop containing nucleotide triphosphate hydrolases"/>
    <property type="match status" value="2"/>
</dbReference>
<dbReference type="InterPro" id="IPR011545">
    <property type="entry name" value="DEAD/DEAH_box_helicase_dom"/>
</dbReference>
<dbReference type="InterPro" id="IPR044763">
    <property type="entry name" value="Ded1/Dbp1_DEADc"/>
</dbReference>
<dbReference type="InterPro" id="IPR014001">
    <property type="entry name" value="Helicase_ATP-bd"/>
</dbReference>
<dbReference type="InterPro" id="IPR001650">
    <property type="entry name" value="Helicase_C-like"/>
</dbReference>
<dbReference type="InterPro" id="IPR027417">
    <property type="entry name" value="P-loop_NTPase"/>
</dbReference>
<dbReference type="InterPro" id="IPR000629">
    <property type="entry name" value="RNA-helicase_DEAD-box_CS"/>
</dbReference>
<dbReference type="InterPro" id="IPR014014">
    <property type="entry name" value="RNA_helicase_DEAD_Q_motif"/>
</dbReference>
<dbReference type="PANTHER" id="PTHR47958">
    <property type="entry name" value="ATP-DEPENDENT RNA HELICASE DBP3"/>
    <property type="match status" value="1"/>
</dbReference>
<dbReference type="Pfam" id="PF00270">
    <property type="entry name" value="DEAD"/>
    <property type="match status" value="1"/>
</dbReference>
<dbReference type="Pfam" id="PF00271">
    <property type="entry name" value="Helicase_C"/>
    <property type="match status" value="1"/>
</dbReference>
<dbReference type="SMART" id="SM00487">
    <property type="entry name" value="DEXDc"/>
    <property type="match status" value="1"/>
</dbReference>
<dbReference type="SMART" id="SM00490">
    <property type="entry name" value="HELICc"/>
    <property type="match status" value="1"/>
</dbReference>
<dbReference type="SUPFAM" id="SSF52540">
    <property type="entry name" value="P-loop containing nucleoside triphosphate hydrolases"/>
    <property type="match status" value="1"/>
</dbReference>
<dbReference type="PROSITE" id="PS00039">
    <property type="entry name" value="DEAD_ATP_HELICASE"/>
    <property type="match status" value="1"/>
</dbReference>
<dbReference type="PROSITE" id="PS51192">
    <property type="entry name" value="HELICASE_ATP_BIND_1"/>
    <property type="match status" value="1"/>
</dbReference>
<dbReference type="PROSITE" id="PS51194">
    <property type="entry name" value="HELICASE_CTER"/>
    <property type="match status" value="1"/>
</dbReference>
<dbReference type="PROSITE" id="PS51195">
    <property type="entry name" value="Q_MOTIF"/>
    <property type="match status" value="1"/>
</dbReference>
<protein>
    <recommendedName>
        <fullName>DEAD-box ATP-dependent RNA helicase 52A</fullName>
        <ecNumber>3.6.4.13</ecNumber>
    </recommendedName>
</protein>
<comment type="catalytic activity">
    <reaction>
        <text>ATP + H2O = ADP + phosphate + H(+)</text>
        <dbReference type="Rhea" id="RHEA:13065"/>
        <dbReference type="ChEBI" id="CHEBI:15377"/>
        <dbReference type="ChEBI" id="CHEBI:15378"/>
        <dbReference type="ChEBI" id="CHEBI:30616"/>
        <dbReference type="ChEBI" id="CHEBI:43474"/>
        <dbReference type="ChEBI" id="CHEBI:456216"/>
        <dbReference type="EC" id="3.6.4.13"/>
    </reaction>
</comment>
<comment type="domain">
    <text>The Q motif is unique to and characteristic of the DEAD box family of RNA helicases and controls ATP binding and hydrolysis.</text>
</comment>
<comment type="similarity">
    <text evidence="4">Belongs to the DEAD box helicase family. DDX3/DED1 subfamily.</text>
</comment>
<comment type="sequence caution" evidence="4">
    <conflict type="erroneous initiation">
        <sequence resource="EMBL-CDS" id="BAF19920"/>
    </conflict>
</comment>
<gene>
    <name type="ordered locus">Os06g0602400</name>
    <name type="ordered locus">LOC_Os06g40020</name>
    <name type="ORF">P0486H12.18</name>
</gene>
<organism>
    <name type="scientific">Oryza sativa subsp. japonica</name>
    <name type="common">Rice</name>
    <dbReference type="NCBI Taxonomy" id="39947"/>
    <lineage>
        <taxon>Eukaryota</taxon>
        <taxon>Viridiplantae</taxon>
        <taxon>Streptophyta</taxon>
        <taxon>Embryophyta</taxon>
        <taxon>Tracheophyta</taxon>
        <taxon>Spermatophyta</taxon>
        <taxon>Magnoliopsida</taxon>
        <taxon>Liliopsida</taxon>
        <taxon>Poales</taxon>
        <taxon>Poaceae</taxon>
        <taxon>BOP clade</taxon>
        <taxon>Oryzoideae</taxon>
        <taxon>Oryzeae</taxon>
        <taxon>Oryzinae</taxon>
        <taxon>Oryza</taxon>
        <taxon>Oryza sativa</taxon>
    </lineage>
</organism>
<keyword id="KW-0067">ATP-binding</keyword>
<keyword id="KW-0347">Helicase</keyword>
<keyword id="KW-0378">Hydrolase</keyword>
<keyword id="KW-0547">Nucleotide-binding</keyword>
<keyword id="KW-1185">Reference proteome</keyword>
<keyword id="KW-0694">RNA-binding</keyword>
<feature type="chain" id="PRO_0000282450" description="DEAD-box ATP-dependent RNA helicase 52A">
    <location>
        <begin position="1"/>
        <end position="602"/>
    </location>
</feature>
<feature type="domain" description="Helicase ATP-binding" evidence="1">
    <location>
        <begin position="115"/>
        <end position="305"/>
    </location>
</feature>
<feature type="domain" description="Helicase C-terminal" evidence="2">
    <location>
        <begin position="328"/>
        <end position="485"/>
    </location>
</feature>
<feature type="region of interest" description="Disordered" evidence="3">
    <location>
        <begin position="9"/>
        <end position="31"/>
    </location>
</feature>
<feature type="region of interest" description="Disordered" evidence="3">
    <location>
        <begin position="492"/>
        <end position="521"/>
    </location>
</feature>
<feature type="region of interest" description="Disordered" evidence="3">
    <location>
        <begin position="552"/>
        <end position="602"/>
    </location>
</feature>
<feature type="short sequence motif" description="Q motif">
    <location>
        <begin position="84"/>
        <end position="112"/>
    </location>
</feature>
<feature type="short sequence motif" description="DEAD box">
    <location>
        <begin position="249"/>
        <end position="252"/>
    </location>
</feature>
<feature type="compositionally biased region" description="Gly residues" evidence="3">
    <location>
        <begin position="15"/>
        <end position="24"/>
    </location>
</feature>
<feature type="compositionally biased region" description="Gly residues" evidence="3">
    <location>
        <begin position="552"/>
        <end position="574"/>
    </location>
</feature>
<feature type="binding site" evidence="1">
    <location>
        <begin position="128"/>
        <end position="135"/>
    </location>
    <ligand>
        <name>ATP</name>
        <dbReference type="ChEBI" id="CHEBI:30616"/>
    </ligand>
</feature>
<proteinExistence type="evidence at transcript level"/>
<sequence length="602" mass="63008">MAAAAAVAKSVEAGGEPGGGGGGAWSTVSRSGRSSYSAGGGVGGGKVGELAEGLAGVEIGGERRLDKYDIPVEVSGEDVPPPADGFEAAGLVEAVLRNVARCGYESPTPVQRYSMPIALAGRDLMACAQTGSGKTAAFCLPVVSGLVAAGGSGIGHRERSSFNRAAAKPRALVLAPTRELAAQINEEAKKFSFQTGLRVVVAYGGTPMYNQLRDLERGADILVATPGRLVDMVERSKVSLEAIKYLVMDEADRMLDMGFEPQIRKIVERMNMPRKSVRQTMLFSATFPPEIQRLASDFLSNYIFITVGRVGSSTDLIMQKVELLSDGEKRGYLLDLLQRQSVGVANSKLQQPLTLVFVETKREADSLRYWLYSKGFPATAIHGDRTQQERESALRSFKTGLTPIMVATDVASRGLDVPNVAHVINYDLPKSIEDYVHRIGRTGRAGKAGSATAFFTESDHSLAKGLLELMTEAKQDVPDWLVQYAERPYYGGSSYGGRNRRSGGGGNRFAGRDFRQGSGGGYSGGGGGGGYSGGGGGGGYSGGGGGYSGGGRGGGYSRGGRGGYSGGGGGGGGDPYRASAPPPRYYPSYPMGTADINASGWD</sequence>
<reference key="1">
    <citation type="journal article" date="2005" name="Nature">
        <title>The map-based sequence of the rice genome.</title>
        <authorList>
            <consortium name="International rice genome sequencing project (IRGSP)"/>
        </authorList>
    </citation>
    <scope>NUCLEOTIDE SEQUENCE [LARGE SCALE GENOMIC DNA]</scope>
    <source>
        <strain>cv. Nipponbare</strain>
    </source>
</reference>
<reference key="2">
    <citation type="journal article" date="2008" name="Nucleic Acids Res.">
        <title>The rice annotation project database (RAP-DB): 2008 update.</title>
        <authorList>
            <consortium name="The rice annotation project (RAP)"/>
        </authorList>
    </citation>
    <scope>GENOME REANNOTATION</scope>
    <source>
        <strain>cv. Nipponbare</strain>
    </source>
</reference>
<reference key="3">
    <citation type="journal article" date="2013" name="Rice">
        <title>Improvement of the Oryza sativa Nipponbare reference genome using next generation sequence and optical map data.</title>
        <authorList>
            <person name="Kawahara Y."/>
            <person name="de la Bastide M."/>
            <person name="Hamilton J.P."/>
            <person name="Kanamori H."/>
            <person name="McCombie W.R."/>
            <person name="Ouyang S."/>
            <person name="Schwartz D.C."/>
            <person name="Tanaka T."/>
            <person name="Wu J."/>
            <person name="Zhou S."/>
            <person name="Childs K.L."/>
            <person name="Davidson R.M."/>
            <person name="Lin H."/>
            <person name="Quesada-Ocampo L."/>
            <person name="Vaillancourt B."/>
            <person name="Sakai H."/>
            <person name="Lee S.S."/>
            <person name="Kim J."/>
            <person name="Numa H."/>
            <person name="Itoh T."/>
            <person name="Buell C.R."/>
            <person name="Matsumoto T."/>
        </authorList>
    </citation>
    <scope>GENOME REANNOTATION</scope>
    <source>
        <strain>cv. Nipponbare</strain>
    </source>
</reference>
<reference key="4">
    <citation type="journal article" date="2003" name="Science">
        <title>Collection, mapping, and annotation of over 28,000 cDNA clones from japonica rice.</title>
        <authorList>
            <consortium name="The rice full-length cDNA consortium"/>
        </authorList>
    </citation>
    <scope>NUCLEOTIDE SEQUENCE [LARGE SCALE MRNA] OF 119-602</scope>
    <source>
        <strain>cv. Nipponbare</strain>
    </source>
</reference>
<accession>Q0DB53</accession>
<accession>Q69XK1</accession>
<name>RH52A_ORYSJ</name>